<reference key="1">
    <citation type="journal article" date="2008" name="BMC Genomics">
        <title>The missing link: Bordetella petrii is endowed with both the metabolic versatility of environmental bacteria and virulence traits of pathogenic Bordetellae.</title>
        <authorList>
            <person name="Gross R."/>
            <person name="Guzman C.A."/>
            <person name="Sebaihia M."/>
            <person name="Martin dos Santos V.A.P."/>
            <person name="Pieper D.H."/>
            <person name="Koebnik R."/>
            <person name="Lechner M."/>
            <person name="Bartels D."/>
            <person name="Buhrmester J."/>
            <person name="Choudhuri J.V."/>
            <person name="Ebensen T."/>
            <person name="Gaigalat L."/>
            <person name="Herrmann S."/>
            <person name="Khachane A.N."/>
            <person name="Larisch C."/>
            <person name="Link S."/>
            <person name="Linke B."/>
            <person name="Meyer F."/>
            <person name="Mormann S."/>
            <person name="Nakunst D."/>
            <person name="Rueckert C."/>
            <person name="Schneiker-Bekel S."/>
            <person name="Schulze K."/>
            <person name="Voerholter F.-J."/>
            <person name="Yevsa T."/>
            <person name="Engle J.T."/>
            <person name="Goldman W.E."/>
            <person name="Puehler A."/>
            <person name="Goebel U.B."/>
            <person name="Goesmann A."/>
            <person name="Bloecker H."/>
            <person name="Kaiser O."/>
            <person name="Martinez-Arias R."/>
        </authorList>
    </citation>
    <scope>NUCLEOTIDE SEQUENCE [LARGE SCALE GENOMIC DNA]</scope>
    <source>
        <strain>ATCC BAA-461 / DSM 12804 / CCUG 43448</strain>
    </source>
</reference>
<gene>
    <name evidence="1" type="primary">hisA</name>
    <name type="ordered locus">Bpet0134</name>
</gene>
<name>HIS4_BORPD</name>
<comment type="catalytic activity">
    <reaction evidence="1">
        <text>1-(5-phospho-beta-D-ribosyl)-5-[(5-phospho-beta-D-ribosylamino)methylideneamino]imidazole-4-carboxamide = 5-[(5-phospho-1-deoxy-D-ribulos-1-ylimino)methylamino]-1-(5-phospho-beta-D-ribosyl)imidazole-4-carboxamide</text>
        <dbReference type="Rhea" id="RHEA:15469"/>
        <dbReference type="ChEBI" id="CHEBI:58435"/>
        <dbReference type="ChEBI" id="CHEBI:58525"/>
        <dbReference type="EC" id="5.3.1.16"/>
    </reaction>
</comment>
<comment type="pathway">
    <text evidence="1">Amino-acid biosynthesis; L-histidine biosynthesis; L-histidine from 5-phospho-alpha-D-ribose 1-diphosphate: step 4/9.</text>
</comment>
<comment type="subcellular location">
    <subcellularLocation>
        <location evidence="1">Cytoplasm</location>
    </subcellularLocation>
</comment>
<comment type="similarity">
    <text evidence="1">Belongs to the HisA/HisF family.</text>
</comment>
<protein>
    <recommendedName>
        <fullName evidence="1">1-(5-phosphoribosyl)-5-[(5-phosphoribosylamino)methylideneamino] imidazole-4-carboxamide isomerase</fullName>
        <ecNumber evidence="1">5.3.1.16</ecNumber>
    </recommendedName>
    <alternativeName>
        <fullName evidence="1">Phosphoribosylformimino-5-aminoimidazole carboxamide ribotide isomerase</fullName>
    </alternativeName>
</protein>
<sequence>MLLIPAIDLKDGRCVRLRQGDLDEATVFSEDPAAMATHWLDLGARRLHLVDLNGAVAGKPKNDAPIKAILDAVGDDIPVQIGGGIRDLDTIESYLDAGISYVIIGTAAVKNPGFLQDACGAFPGHIIVGLDARDGKIATDGWSKLTRHDVLDLAKKFEDYGCEAIIYTDISRDGMLSGVNVDATVRLAQHVRIPVYASGGIAGLSDIEALCAVEEEGVEGAILGRSIYEGALDFQAAQARADELTQ</sequence>
<dbReference type="EC" id="5.3.1.16" evidence="1"/>
<dbReference type="EMBL" id="AM902716">
    <property type="protein sequence ID" value="CAP40465.1"/>
    <property type="molecule type" value="Genomic_DNA"/>
</dbReference>
<dbReference type="SMR" id="A9HWC3"/>
<dbReference type="STRING" id="94624.Bpet0134"/>
<dbReference type="KEGG" id="bpt:Bpet0134"/>
<dbReference type="eggNOG" id="COG0106">
    <property type="taxonomic scope" value="Bacteria"/>
</dbReference>
<dbReference type="UniPathway" id="UPA00031">
    <property type="reaction ID" value="UER00009"/>
</dbReference>
<dbReference type="Proteomes" id="UP000001225">
    <property type="component" value="Chromosome"/>
</dbReference>
<dbReference type="GO" id="GO:0005737">
    <property type="term" value="C:cytoplasm"/>
    <property type="evidence" value="ECO:0007669"/>
    <property type="project" value="UniProtKB-SubCell"/>
</dbReference>
<dbReference type="GO" id="GO:0003949">
    <property type="term" value="F:1-(5-phosphoribosyl)-5-[(5-phosphoribosylamino)methylideneamino]imidazole-4-carboxamide isomerase activity"/>
    <property type="evidence" value="ECO:0007669"/>
    <property type="project" value="UniProtKB-UniRule"/>
</dbReference>
<dbReference type="GO" id="GO:0000105">
    <property type="term" value="P:L-histidine biosynthetic process"/>
    <property type="evidence" value="ECO:0007669"/>
    <property type="project" value="UniProtKB-UniRule"/>
</dbReference>
<dbReference type="GO" id="GO:0000162">
    <property type="term" value="P:L-tryptophan biosynthetic process"/>
    <property type="evidence" value="ECO:0007669"/>
    <property type="project" value="TreeGrafter"/>
</dbReference>
<dbReference type="CDD" id="cd04732">
    <property type="entry name" value="HisA"/>
    <property type="match status" value="1"/>
</dbReference>
<dbReference type="FunFam" id="3.20.20.70:FF:000009">
    <property type="entry name" value="1-(5-phosphoribosyl)-5-[(5-phosphoribosylamino)methylideneamino] imidazole-4-carboxamide isomerase"/>
    <property type="match status" value="1"/>
</dbReference>
<dbReference type="Gene3D" id="3.20.20.70">
    <property type="entry name" value="Aldolase class I"/>
    <property type="match status" value="1"/>
</dbReference>
<dbReference type="HAMAP" id="MF_01014">
    <property type="entry name" value="HisA"/>
    <property type="match status" value="1"/>
</dbReference>
<dbReference type="InterPro" id="IPR013785">
    <property type="entry name" value="Aldolase_TIM"/>
</dbReference>
<dbReference type="InterPro" id="IPR006062">
    <property type="entry name" value="His_biosynth"/>
</dbReference>
<dbReference type="InterPro" id="IPR006063">
    <property type="entry name" value="HisA_bact_arch"/>
</dbReference>
<dbReference type="InterPro" id="IPR044524">
    <property type="entry name" value="Isoase_HisA-like"/>
</dbReference>
<dbReference type="InterPro" id="IPR023016">
    <property type="entry name" value="Isoase_HisA-like_bact"/>
</dbReference>
<dbReference type="InterPro" id="IPR011060">
    <property type="entry name" value="RibuloseP-bd_barrel"/>
</dbReference>
<dbReference type="NCBIfam" id="TIGR00007">
    <property type="entry name" value="1-(5-phosphoribosyl)-5-[(5-phosphoribosylamino)methylideneamino]imidazole-4-carboxamide isomerase"/>
    <property type="match status" value="1"/>
</dbReference>
<dbReference type="PANTHER" id="PTHR43090">
    <property type="entry name" value="1-(5-PHOSPHORIBOSYL)-5-[(5-PHOSPHORIBOSYLAMINO)METHYLIDENEAMINO] IMIDAZOLE-4-CARBOXAMIDE ISOMERASE"/>
    <property type="match status" value="1"/>
</dbReference>
<dbReference type="PANTHER" id="PTHR43090:SF2">
    <property type="entry name" value="1-(5-PHOSPHORIBOSYL)-5-[(5-PHOSPHORIBOSYLAMINO)METHYLIDENEAMINO] IMIDAZOLE-4-CARBOXAMIDE ISOMERASE"/>
    <property type="match status" value="1"/>
</dbReference>
<dbReference type="Pfam" id="PF00977">
    <property type="entry name" value="His_biosynth"/>
    <property type="match status" value="1"/>
</dbReference>
<dbReference type="SUPFAM" id="SSF51366">
    <property type="entry name" value="Ribulose-phoshate binding barrel"/>
    <property type="match status" value="1"/>
</dbReference>
<evidence type="ECO:0000255" key="1">
    <source>
        <dbReference type="HAMAP-Rule" id="MF_01014"/>
    </source>
</evidence>
<organism>
    <name type="scientific">Bordetella petrii (strain ATCC BAA-461 / DSM 12804 / CCUG 43448)</name>
    <dbReference type="NCBI Taxonomy" id="340100"/>
    <lineage>
        <taxon>Bacteria</taxon>
        <taxon>Pseudomonadati</taxon>
        <taxon>Pseudomonadota</taxon>
        <taxon>Betaproteobacteria</taxon>
        <taxon>Burkholderiales</taxon>
        <taxon>Alcaligenaceae</taxon>
        <taxon>Bordetella</taxon>
    </lineage>
</organism>
<keyword id="KW-0028">Amino-acid biosynthesis</keyword>
<keyword id="KW-0963">Cytoplasm</keyword>
<keyword id="KW-0368">Histidine biosynthesis</keyword>
<keyword id="KW-0413">Isomerase</keyword>
<proteinExistence type="inferred from homology"/>
<accession>A9HWC3</accession>
<feature type="chain" id="PRO_1000135085" description="1-(5-phosphoribosyl)-5-[(5-phosphoribosylamino)methylideneamino] imidazole-4-carboxamide isomerase">
    <location>
        <begin position="1"/>
        <end position="246"/>
    </location>
</feature>
<feature type="active site" description="Proton acceptor" evidence="1">
    <location>
        <position position="8"/>
    </location>
</feature>
<feature type="active site" description="Proton donor" evidence="1">
    <location>
        <position position="131"/>
    </location>
</feature>